<evidence type="ECO:0000255" key="1">
    <source>
        <dbReference type="HAMAP-Rule" id="MF_01366"/>
    </source>
</evidence>
<evidence type="ECO:0000305" key="2"/>
<gene>
    <name evidence="1" type="primary">rplM</name>
    <name type="ordered locus">xcc-b100_0506</name>
</gene>
<reference key="1">
    <citation type="journal article" date="2008" name="J. Biotechnol.">
        <title>The genome of Xanthomonas campestris pv. campestris B100 and its use for the reconstruction of metabolic pathways involved in xanthan biosynthesis.</title>
        <authorList>
            <person name="Vorhoelter F.-J."/>
            <person name="Schneiker S."/>
            <person name="Goesmann A."/>
            <person name="Krause L."/>
            <person name="Bekel T."/>
            <person name="Kaiser O."/>
            <person name="Linke B."/>
            <person name="Patschkowski T."/>
            <person name="Rueckert C."/>
            <person name="Schmid J."/>
            <person name="Sidhu V.K."/>
            <person name="Sieber V."/>
            <person name="Tauch A."/>
            <person name="Watt S.A."/>
            <person name="Weisshaar B."/>
            <person name="Becker A."/>
            <person name="Niehaus K."/>
            <person name="Puehler A."/>
        </authorList>
    </citation>
    <scope>NUCLEOTIDE SEQUENCE [LARGE SCALE GENOMIC DNA]</scope>
    <source>
        <strain>B100</strain>
    </source>
</reference>
<comment type="function">
    <text evidence="1">This protein is one of the early assembly proteins of the 50S ribosomal subunit, although it is not seen to bind rRNA by itself. It is important during the early stages of 50S assembly.</text>
</comment>
<comment type="subunit">
    <text evidence="1">Part of the 50S ribosomal subunit.</text>
</comment>
<comment type="similarity">
    <text evidence="1">Belongs to the universal ribosomal protein uL13 family.</text>
</comment>
<name>RL13_XANCB</name>
<protein>
    <recommendedName>
        <fullName evidence="1">Large ribosomal subunit protein uL13</fullName>
    </recommendedName>
    <alternativeName>
        <fullName evidence="2">50S ribosomal protein L13</fullName>
    </alternativeName>
</protein>
<accession>B0RN05</accession>
<feature type="chain" id="PRO_1000144197" description="Large ribosomal subunit protein uL13">
    <location>
        <begin position="1"/>
        <end position="142"/>
    </location>
</feature>
<dbReference type="EMBL" id="AM920689">
    <property type="protein sequence ID" value="CAP49840.1"/>
    <property type="molecule type" value="Genomic_DNA"/>
</dbReference>
<dbReference type="SMR" id="B0RN05"/>
<dbReference type="KEGG" id="xca:xcc-b100_0506"/>
<dbReference type="HOGENOM" id="CLU_082184_2_2_6"/>
<dbReference type="Proteomes" id="UP000001188">
    <property type="component" value="Chromosome"/>
</dbReference>
<dbReference type="GO" id="GO:0022625">
    <property type="term" value="C:cytosolic large ribosomal subunit"/>
    <property type="evidence" value="ECO:0007669"/>
    <property type="project" value="TreeGrafter"/>
</dbReference>
<dbReference type="GO" id="GO:0003729">
    <property type="term" value="F:mRNA binding"/>
    <property type="evidence" value="ECO:0007669"/>
    <property type="project" value="TreeGrafter"/>
</dbReference>
<dbReference type="GO" id="GO:0003735">
    <property type="term" value="F:structural constituent of ribosome"/>
    <property type="evidence" value="ECO:0007669"/>
    <property type="project" value="InterPro"/>
</dbReference>
<dbReference type="GO" id="GO:0017148">
    <property type="term" value="P:negative regulation of translation"/>
    <property type="evidence" value="ECO:0007669"/>
    <property type="project" value="TreeGrafter"/>
</dbReference>
<dbReference type="GO" id="GO:0006412">
    <property type="term" value="P:translation"/>
    <property type="evidence" value="ECO:0007669"/>
    <property type="project" value="UniProtKB-UniRule"/>
</dbReference>
<dbReference type="CDD" id="cd00392">
    <property type="entry name" value="Ribosomal_L13"/>
    <property type="match status" value="1"/>
</dbReference>
<dbReference type="FunFam" id="3.90.1180.10:FF:000001">
    <property type="entry name" value="50S ribosomal protein L13"/>
    <property type="match status" value="1"/>
</dbReference>
<dbReference type="Gene3D" id="3.90.1180.10">
    <property type="entry name" value="Ribosomal protein L13"/>
    <property type="match status" value="1"/>
</dbReference>
<dbReference type="HAMAP" id="MF_01366">
    <property type="entry name" value="Ribosomal_uL13"/>
    <property type="match status" value="1"/>
</dbReference>
<dbReference type="InterPro" id="IPR005822">
    <property type="entry name" value="Ribosomal_uL13"/>
</dbReference>
<dbReference type="InterPro" id="IPR005823">
    <property type="entry name" value="Ribosomal_uL13_bac-type"/>
</dbReference>
<dbReference type="InterPro" id="IPR023563">
    <property type="entry name" value="Ribosomal_uL13_CS"/>
</dbReference>
<dbReference type="InterPro" id="IPR036899">
    <property type="entry name" value="Ribosomal_uL13_sf"/>
</dbReference>
<dbReference type="NCBIfam" id="TIGR01066">
    <property type="entry name" value="rplM_bact"/>
    <property type="match status" value="1"/>
</dbReference>
<dbReference type="PANTHER" id="PTHR11545:SF2">
    <property type="entry name" value="LARGE RIBOSOMAL SUBUNIT PROTEIN UL13M"/>
    <property type="match status" value="1"/>
</dbReference>
<dbReference type="PANTHER" id="PTHR11545">
    <property type="entry name" value="RIBOSOMAL PROTEIN L13"/>
    <property type="match status" value="1"/>
</dbReference>
<dbReference type="Pfam" id="PF00572">
    <property type="entry name" value="Ribosomal_L13"/>
    <property type="match status" value="1"/>
</dbReference>
<dbReference type="PIRSF" id="PIRSF002181">
    <property type="entry name" value="Ribosomal_L13"/>
    <property type="match status" value="1"/>
</dbReference>
<dbReference type="SUPFAM" id="SSF52161">
    <property type="entry name" value="Ribosomal protein L13"/>
    <property type="match status" value="1"/>
</dbReference>
<dbReference type="PROSITE" id="PS00783">
    <property type="entry name" value="RIBOSOMAL_L13"/>
    <property type="match status" value="1"/>
</dbReference>
<proteinExistence type="inferred from homology"/>
<sequence length="142" mass="16081">MTTFTAKSETVQRDWYLVDAAGKTLGRLSTELARRLRGKHKPVYTPHVDTGDYLVVINAEKIVVTGNKLKDKKYHRFTGYIGNLKTESLEQALQRHPERVIEIAVKGMLPKGPLGRTMYRKLKVYSGAEHPHAAQQPQVLDI</sequence>
<organism>
    <name type="scientific">Xanthomonas campestris pv. campestris (strain B100)</name>
    <dbReference type="NCBI Taxonomy" id="509169"/>
    <lineage>
        <taxon>Bacteria</taxon>
        <taxon>Pseudomonadati</taxon>
        <taxon>Pseudomonadota</taxon>
        <taxon>Gammaproteobacteria</taxon>
        <taxon>Lysobacterales</taxon>
        <taxon>Lysobacteraceae</taxon>
        <taxon>Xanthomonas</taxon>
    </lineage>
</organism>
<keyword id="KW-0687">Ribonucleoprotein</keyword>
<keyword id="KW-0689">Ribosomal protein</keyword>